<reference key="1">
    <citation type="journal article" date="1987" name="Nature">
        <title>Sequence of simian immunodeficiency virus from macaque and its relationship to other human and simian retroviruses.</title>
        <authorList>
            <person name="Chakrabarti L."/>
            <person name="Guyader M."/>
            <person name="Alizon M."/>
            <person name="Daniel M.D."/>
            <person name="Desrosiers R.C."/>
            <person name="Tiollais P."/>
            <person name="Sonigo P."/>
        </authorList>
    </citation>
    <scope>NUCLEOTIDE SEQUENCE [GENOMIC DNA]</scope>
</reference>
<organismHost>
    <name type="scientific">Cercopithecidae</name>
    <name type="common">Old World monkeys</name>
    <dbReference type="NCBI Taxonomy" id="9527"/>
</organismHost>
<sequence length="107" mass="12443">MRSHTGEEELRRRLRLIHLLHQTNPYPTGSGSANQRRQKRRRWRQRWQQLLALADRIYSFPDPPTDTPLDLAIQQLQNLAIESIPDPPTNIPEALCDPTENSRSPQA</sequence>
<gene>
    <name type="primary">rev</name>
</gene>
<evidence type="ECO:0000250" key="1"/>
<evidence type="ECO:0000256" key="2">
    <source>
        <dbReference type="SAM" id="MobiDB-lite"/>
    </source>
</evidence>
<proteinExistence type="inferred from homology"/>
<protein>
    <recommendedName>
        <fullName>Protein Rev</fullName>
    </recommendedName>
    <alternativeName>
        <fullName>Regulator of expression of viral proteins</fullName>
    </alternativeName>
</protein>
<comment type="function">
    <text evidence="1">Escorts unspliced or incompletely spliced viral pre-mRNAs (late transcripts) out of the nucleus of infected cells. These pre-mRNAs carry a recognition sequence called Rev responsive element (RRE) located in the env gene, that is not present in fully spliced viral mRNAs (early transcripts). This function is essential since most viral proteins are translated from unspliced or partially spliced pre-mRNAs which cannot exit the nucleus by the pathway used by fully processed cellular mRNAs (By similarity).</text>
</comment>
<comment type="subunit">
    <text evidence="1">Homomultimer; when bound to the RRE. Multimeric assembly is essential for activity (By similarity).</text>
</comment>
<comment type="subcellular location">
    <subcellularLocation>
        <location>Host nucleus</location>
        <location>Host nucleolus</location>
    </subcellularLocation>
    <subcellularLocation>
        <location>Host cytoplasm</location>
    </subcellularLocation>
    <text evidence="1">The presence of both nuclear import and nuclear export signals leads to continuous shuttling between the nucleus and cytoplasm.</text>
</comment>
<comment type="domain">
    <text evidence="1">The RNA-binding motif binds to the RRE, a stem-and-loop structure present in incompletely spliced viral pre-mRNAs. This region also contains the NLS which mediates nuclear localization. These overlapping functions prevent Rev bound to RRE from undesirable return to the nucleus. When Rev binds the RRE, the NLS becomes masked while the NES remains accessible (By similarity).</text>
</comment>
<accession>P05875</accession>
<accession>Q85724</accession>
<name>REV_SIVM1</name>
<feature type="chain" id="PRO_0000085297" description="Protein Rev">
    <location>
        <begin position="1"/>
        <end position="107"/>
    </location>
</feature>
<feature type="region of interest" description="Homomultimerization" evidence="1">
    <location>
        <begin position="16"/>
        <end position="24"/>
    </location>
</feature>
<feature type="region of interest" description="Disordered" evidence="2">
    <location>
        <begin position="21"/>
        <end position="41"/>
    </location>
</feature>
<feature type="region of interest" description="Disordered" evidence="2">
    <location>
        <begin position="83"/>
        <end position="107"/>
    </location>
</feature>
<feature type="short sequence motif" description="Nuclear localization signal and RNA-binding (RRE)" evidence="1">
    <location>
        <begin position="32"/>
        <end position="48"/>
    </location>
</feature>
<feature type="short sequence motif" description="Nuclear export signal" evidence="1">
    <location>
        <begin position="69"/>
        <end position="81"/>
    </location>
</feature>
<feature type="compositionally biased region" description="Polar residues" evidence="2">
    <location>
        <begin position="21"/>
        <end position="34"/>
    </location>
</feature>
<keyword id="KW-1035">Host cytoplasm</keyword>
<keyword id="KW-1048">Host nucleus</keyword>
<keyword id="KW-0509">mRNA transport</keyword>
<keyword id="KW-0694">RNA-binding</keyword>
<keyword id="KW-0813">Transport</keyword>
<organism>
    <name type="scientific">Simian immunodeficiency virus (isolate Mm142-83)</name>
    <name type="common">SIV-mac</name>
    <name type="synonym">Simian immunodeficiency virus rhesus monkey</name>
    <dbReference type="NCBI Taxonomy" id="11733"/>
    <lineage>
        <taxon>Viruses</taxon>
        <taxon>Riboviria</taxon>
        <taxon>Pararnavirae</taxon>
        <taxon>Artverviricota</taxon>
        <taxon>Revtraviricetes</taxon>
        <taxon>Ortervirales</taxon>
        <taxon>Retroviridae</taxon>
        <taxon>Orthoretrovirinae</taxon>
        <taxon>Lentivirus</taxon>
        <taxon>Simian immunodeficiency virus</taxon>
    </lineage>
</organism>
<dbReference type="EMBL" id="Y00277">
    <property type="protein sequence ID" value="CAB46522.1"/>
    <property type="molecule type" value="Genomic_DNA"/>
</dbReference>
<dbReference type="PIR" id="G28887">
    <property type="entry name" value="VKLJG3"/>
</dbReference>
<dbReference type="SMR" id="P05875"/>
<dbReference type="Proteomes" id="UP000007220">
    <property type="component" value="Segment"/>
</dbReference>
<dbReference type="GO" id="GO:0030430">
    <property type="term" value="C:host cell cytoplasm"/>
    <property type="evidence" value="ECO:0007669"/>
    <property type="project" value="UniProtKB-SubCell"/>
</dbReference>
<dbReference type="GO" id="GO:0044196">
    <property type="term" value="C:host cell nucleolus"/>
    <property type="evidence" value="ECO:0007669"/>
    <property type="project" value="UniProtKB-SubCell"/>
</dbReference>
<dbReference type="GO" id="GO:0003700">
    <property type="term" value="F:DNA-binding transcription factor activity"/>
    <property type="evidence" value="ECO:0007669"/>
    <property type="project" value="InterPro"/>
</dbReference>
<dbReference type="GO" id="GO:0003723">
    <property type="term" value="F:RNA binding"/>
    <property type="evidence" value="ECO:0007669"/>
    <property type="project" value="UniProtKB-KW"/>
</dbReference>
<dbReference type="GO" id="GO:0051028">
    <property type="term" value="P:mRNA transport"/>
    <property type="evidence" value="ECO:0007669"/>
    <property type="project" value="UniProtKB-KW"/>
</dbReference>
<dbReference type="Gene3D" id="6.10.140.630">
    <property type="match status" value="1"/>
</dbReference>
<dbReference type="InterPro" id="IPR000625">
    <property type="entry name" value="REV_protein"/>
</dbReference>
<dbReference type="Pfam" id="PF00424">
    <property type="entry name" value="REV"/>
    <property type="match status" value="1"/>
</dbReference>